<dbReference type="EMBL" id="AL590450">
    <property type="protein sequence ID" value="CAD26085.1"/>
    <property type="molecule type" value="Genomic_DNA"/>
</dbReference>
<dbReference type="RefSeq" id="NP_586481.1">
    <property type="nucleotide sequence ID" value="NM_001042314.1"/>
</dbReference>
<dbReference type="PDB" id="2J4B">
    <property type="method" value="X-ray"/>
    <property type="resolution" value="2.50 A"/>
    <property type="chains" value="A/B/C/D/E=16-149"/>
</dbReference>
<dbReference type="PDBsum" id="2J4B"/>
<dbReference type="SMR" id="Q8SQS4"/>
<dbReference type="FunCoup" id="Q8SQS4">
    <property type="interactions" value="128"/>
</dbReference>
<dbReference type="STRING" id="284813.Q8SQS4"/>
<dbReference type="GeneID" id="860135"/>
<dbReference type="KEGG" id="ecu:ECU11_1750"/>
<dbReference type="VEuPathDB" id="MicrosporidiaDB:ECU11_1750"/>
<dbReference type="HOGENOM" id="CLU_005884_2_1_1"/>
<dbReference type="InParanoid" id="Q8SQS4"/>
<dbReference type="OMA" id="HLDMVHC"/>
<dbReference type="OrthoDB" id="10266330at2759"/>
<dbReference type="EvolutionaryTrace" id="Q8SQS4"/>
<dbReference type="Proteomes" id="UP000000819">
    <property type="component" value="Chromosome XI"/>
</dbReference>
<dbReference type="GO" id="GO:0005669">
    <property type="term" value="C:transcription factor TFIID complex"/>
    <property type="evidence" value="ECO:0007669"/>
    <property type="project" value="TreeGrafter"/>
</dbReference>
<dbReference type="GO" id="GO:0016251">
    <property type="term" value="F:RNA polymerase II general transcription initiation factor activity"/>
    <property type="evidence" value="ECO:0007669"/>
    <property type="project" value="TreeGrafter"/>
</dbReference>
<dbReference type="GO" id="GO:0006367">
    <property type="term" value="P:transcription initiation at RNA polymerase II promoter"/>
    <property type="evidence" value="ECO:0007669"/>
    <property type="project" value="TreeGrafter"/>
</dbReference>
<dbReference type="CDD" id="cd08044">
    <property type="entry name" value="TAF5_NTD2"/>
    <property type="match status" value="1"/>
</dbReference>
<dbReference type="CDD" id="cd00200">
    <property type="entry name" value="WD40"/>
    <property type="match status" value="1"/>
</dbReference>
<dbReference type="Gene3D" id="1.25.40.500">
    <property type="entry name" value="TFIID subunit TAF5, NTD2 domain"/>
    <property type="match status" value="1"/>
</dbReference>
<dbReference type="Gene3D" id="2.130.10.10">
    <property type="entry name" value="YVTN repeat-like/Quinoprotein amine dehydrogenase"/>
    <property type="match status" value="3"/>
</dbReference>
<dbReference type="InterPro" id="IPR020472">
    <property type="entry name" value="G-protein_beta_WD-40_rep"/>
</dbReference>
<dbReference type="InterPro" id="IPR007582">
    <property type="entry name" value="TFIID_NTD2"/>
</dbReference>
<dbReference type="InterPro" id="IPR037264">
    <property type="entry name" value="TFIID_NTD2_sf"/>
</dbReference>
<dbReference type="InterPro" id="IPR015943">
    <property type="entry name" value="WD40/YVTN_repeat-like_dom_sf"/>
</dbReference>
<dbReference type="InterPro" id="IPR019775">
    <property type="entry name" value="WD40_repeat_CS"/>
</dbReference>
<dbReference type="InterPro" id="IPR036322">
    <property type="entry name" value="WD40_repeat_dom_sf"/>
</dbReference>
<dbReference type="InterPro" id="IPR001680">
    <property type="entry name" value="WD40_rpt"/>
</dbReference>
<dbReference type="PANTHER" id="PTHR19879:SF1">
    <property type="entry name" value="CANNONBALL-RELATED"/>
    <property type="match status" value="1"/>
</dbReference>
<dbReference type="PANTHER" id="PTHR19879">
    <property type="entry name" value="TRANSCRIPTION INITIATION FACTOR TFIID"/>
    <property type="match status" value="1"/>
</dbReference>
<dbReference type="Pfam" id="PF04494">
    <property type="entry name" value="TFIID_NTD2"/>
    <property type="match status" value="1"/>
</dbReference>
<dbReference type="Pfam" id="PF00400">
    <property type="entry name" value="WD40"/>
    <property type="match status" value="5"/>
</dbReference>
<dbReference type="PRINTS" id="PR00320">
    <property type="entry name" value="GPROTEINBRPT"/>
</dbReference>
<dbReference type="SMART" id="SM00320">
    <property type="entry name" value="WD40"/>
    <property type="match status" value="6"/>
</dbReference>
<dbReference type="SUPFAM" id="SSF160897">
    <property type="entry name" value="Taf5 N-terminal domain-like"/>
    <property type="match status" value="1"/>
</dbReference>
<dbReference type="SUPFAM" id="SSF50978">
    <property type="entry name" value="WD40 repeat-like"/>
    <property type="match status" value="1"/>
</dbReference>
<dbReference type="PROSITE" id="PS00678">
    <property type="entry name" value="WD_REPEATS_1"/>
    <property type="match status" value="1"/>
</dbReference>
<dbReference type="PROSITE" id="PS50082">
    <property type="entry name" value="WD_REPEATS_2"/>
    <property type="match status" value="5"/>
</dbReference>
<dbReference type="PROSITE" id="PS50294">
    <property type="entry name" value="WD_REPEATS_REGION"/>
    <property type="match status" value="1"/>
</dbReference>
<reference key="1">
    <citation type="journal article" date="2001" name="Nature">
        <title>Genome sequence and gene compaction of the eukaryote parasite Encephalitozoon cuniculi.</title>
        <authorList>
            <person name="Katinka M.D."/>
            <person name="Duprat S."/>
            <person name="Cornillot E."/>
            <person name="Metenier G."/>
            <person name="Thomarat F."/>
            <person name="Prensier G."/>
            <person name="Barbe V."/>
            <person name="Peyretaillade E."/>
            <person name="Brottier P."/>
            <person name="Wincker P."/>
            <person name="Delbac F."/>
            <person name="El Alaoui H."/>
            <person name="Peyret P."/>
            <person name="Saurin W."/>
            <person name="Gouy M."/>
            <person name="Weissenbach J."/>
            <person name="Vivares C.P."/>
        </authorList>
    </citation>
    <scope>NUCLEOTIDE SEQUENCE [LARGE SCALE GENOMIC DNA]</scope>
    <source>
        <strain>GB-M1</strain>
    </source>
</reference>
<reference key="2">
    <citation type="journal article" date="2007" name="J. Mol. Biol.">
        <title>Crystal structure, biochemical and genetic characterization of yeast and E. cuniculi TAF(II)5 N-terminal domain: implications for TFIID assembly.</title>
        <authorList>
            <person name="Romier C."/>
            <person name="James N."/>
            <person name="Birck C."/>
            <person name="Cavarelli J."/>
            <person name="Vivares C.P."/>
            <person name="Collart M.A."/>
            <person name="Moras D."/>
        </authorList>
    </citation>
    <scope>X-RAY CRYSTALLOGRAPHY (2.5 ANGSTROMS) OF 16-149</scope>
</reference>
<comment type="function">
    <text evidence="1">TAFs are components of the transcription factor IID (TFIID) complex that are essential for mediating regulation of RNA polymerase transcription. Regulates the genes involved in ubiquitin-dependent proteolysis during the progression of M-phase of mitosis (By similarity).</text>
</comment>
<comment type="subunit">
    <text evidence="1">Component of the TFIID and SAGA complexes. TFIID is composed of TATA binding protein (TBP) and a number of TBP-associated factors (TAFs) (By similarity).</text>
</comment>
<comment type="subcellular location">
    <subcellularLocation>
        <location evidence="1">Nucleus</location>
    </subcellularLocation>
</comment>
<comment type="similarity">
    <text evidence="2">Belongs to the WD repeat TAF5 family.</text>
</comment>
<keyword id="KW-0002">3D-structure</keyword>
<keyword id="KW-0539">Nucleus</keyword>
<keyword id="KW-1185">Reference proteome</keyword>
<keyword id="KW-0677">Repeat</keyword>
<keyword id="KW-0804">Transcription</keyword>
<keyword id="KW-0805">Transcription regulation</keyword>
<keyword id="KW-0853">WD repeat</keyword>
<organism>
    <name type="scientific">Encephalitozoon cuniculi (strain GB-M1)</name>
    <name type="common">Microsporidian parasite</name>
    <dbReference type="NCBI Taxonomy" id="284813"/>
    <lineage>
        <taxon>Eukaryota</taxon>
        <taxon>Fungi</taxon>
        <taxon>Fungi incertae sedis</taxon>
        <taxon>Microsporidia</taxon>
        <taxon>Unikaryonidae</taxon>
        <taxon>Encephalitozoon</taxon>
    </lineage>
</organism>
<feature type="chain" id="PRO_0000383042" description="Transcription initiation factor TFIID subunit 5">
    <location>
        <begin position="1"/>
        <end position="556"/>
    </location>
</feature>
<feature type="repeat" description="WD 1">
    <location>
        <begin position="251"/>
        <end position="291"/>
    </location>
</feature>
<feature type="repeat" description="WD 2">
    <location>
        <begin position="320"/>
        <end position="359"/>
    </location>
</feature>
<feature type="repeat" description="WD 3">
    <location>
        <begin position="362"/>
        <end position="401"/>
    </location>
</feature>
<feature type="repeat" description="WD 4">
    <location>
        <begin position="404"/>
        <end position="443"/>
    </location>
</feature>
<feature type="repeat" description="WD 5">
    <location>
        <begin position="446"/>
        <end position="485"/>
    </location>
</feature>
<feature type="repeat" description="WD 6">
    <location>
        <begin position="488"/>
        <end position="527"/>
    </location>
</feature>
<feature type="helix" evidence="3">
    <location>
        <begin position="19"/>
        <end position="32"/>
    </location>
</feature>
<feature type="helix" evidence="3">
    <location>
        <begin position="35"/>
        <end position="41"/>
    </location>
</feature>
<feature type="helix" evidence="3">
    <location>
        <begin position="42"/>
        <end position="44"/>
    </location>
</feature>
<feature type="helix" evidence="3">
    <location>
        <begin position="45"/>
        <end position="58"/>
    </location>
</feature>
<feature type="helix" evidence="3">
    <location>
        <begin position="62"/>
        <end position="72"/>
    </location>
</feature>
<feature type="helix" evidence="3">
    <location>
        <begin position="73"/>
        <end position="75"/>
    </location>
</feature>
<feature type="helix" evidence="3">
    <location>
        <begin position="80"/>
        <end position="86"/>
    </location>
</feature>
<feature type="helix" evidence="3">
    <location>
        <begin position="92"/>
        <end position="97"/>
    </location>
</feature>
<feature type="helix" evidence="3">
    <location>
        <begin position="99"/>
        <end position="106"/>
    </location>
</feature>
<feature type="strand" evidence="3">
    <location>
        <begin position="109"/>
        <end position="114"/>
    </location>
</feature>
<feature type="helix" evidence="3">
    <location>
        <begin position="115"/>
        <end position="127"/>
    </location>
</feature>
<feature type="helix" evidence="3">
    <location>
        <begin position="131"/>
        <end position="140"/>
    </location>
</feature>
<feature type="strand" evidence="3">
    <location>
        <begin position="141"/>
        <end position="146"/>
    </location>
</feature>
<proteinExistence type="evidence at protein level"/>
<name>TAF5_ENCCU</name>
<sequence>MSENIRESISAKTLSKDQMETSYVSLKTWIEDSLDLFKNDLLPLLYPLFIHIYFDLIQQNKTDEAKEFFEKYRGDHYNKSEEIKQFESIYTVQHIHENNFAYTFKNSKYHLSMGRYAFDLLINFLEERNLTYILKILNQHLDIKVYVGPKSEERPQGIETSVVDAEIDLTTFLVSRECEDAILGDEQYRYDHLETYVLQLRKQREMKPKDSVYKPNASQIHAEIEKLKDLCKRVAVNKNNLPSICCYTIHNTYEGLTAAEISNDLKLMACGFKDSYVEVYSLTNESLKKLKSSSELAKSDIKTLNEEKFEEVGSSYKLVGHSGPVYGLKFFSSNKFLVSSSQDCTVCLWSLDLLCLLAVYKAHAFPVWCVDVAPNDYFFASGAGDRQAIVWSVMTSKPERLIISSLSDVTAVKFHPNSSYLFTGSSDHRVRMHDISTASVVRIFCGHTDTVTCMDVSHCGKFLASGSKDRTVLLWDIQSSKLLGKYVGHENTVFSVSFCFYGSVLASCGADNSVRLWDRTDHKGGCLGTYYTKNTPLLCVKFGYRNIISCTGPFIS</sequence>
<evidence type="ECO:0000250" key="1"/>
<evidence type="ECO:0000305" key="2"/>
<evidence type="ECO:0007829" key="3">
    <source>
        <dbReference type="PDB" id="2J4B"/>
    </source>
</evidence>
<accession>Q8SQS4</accession>
<gene>
    <name type="primary">TAF5</name>
    <name type="ordered locus">ECU11_1750</name>
</gene>
<protein>
    <recommendedName>
        <fullName>Transcription initiation factor TFIID subunit 5</fullName>
    </recommendedName>
</protein>